<name>NAGB_TREDE</name>
<proteinExistence type="inferred from homology"/>
<sequence>MRLIIKNSYEDCSKWTADYICNKIIEFKPTKEKPFVLGLPTGSTPLGVYKELIKKHKEGILSFKHVVTFNMDEYVGLEASHPQSYHYFMMDNFFNHIDIEPKNIHILDGMAKDKKKECEDYEKAIRSYGKIHLFLGGIGADGHIAFNEPYSSLTSRTREKTLTRDTIIMNSRFFEGNEDLVPKTALTVGIGTIMDAEEVLIMATGHAKAEAVHQAVEGGVSHVWTVSALQLHPKSIIICDDAATDELKVKTVKYFLDIEKGNIETNVSRK</sequence>
<organism>
    <name type="scientific">Treponema denticola (strain ATCC 35405 / DSM 14222 / CIP 103919 / JCM 8153 / KCTC 15104)</name>
    <dbReference type="NCBI Taxonomy" id="243275"/>
    <lineage>
        <taxon>Bacteria</taxon>
        <taxon>Pseudomonadati</taxon>
        <taxon>Spirochaetota</taxon>
        <taxon>Spirochaetia</taxon>
        <taxon>Spirochaetales</taxon>
        <taxon>Treponemataceae</taxon>
        <taxon>Treponema</taxon>
    </lineage>
</organism>
<comment type="function">
    <text evidence="1">Catalyzes the reversible isomerization-deamination of glucosamine 6-phosphate (GlcN6P) to form fructose 6-phosphate (Fru6P) and ammonium ion.</text>
</comment>
<comment type="catalytic activity">
    <reaction evidence="1">
        <text>alpha-D-glucosamine 6-phosphate + H2O = beta-D-fructose 6-phosphate + NH4(+)</text>
        <dbReference type="Rhea" id="RHEA:12172"/>
        <dbReference type="ChEBI" id="CHEBI:15377"/>
        <dbReference type="ChEBI" id="CHEBI:28938"/>
        <dbReference type="ChEBI" id="CHEBI:57634"/>
        <dbReference type="ChEBI" id="CHEBI:75989"/>
        <dbReference type="EC" id="3.5.99.6"/>
    </reaction>
</comment>
<comment type="activity regulation">
    <text evidence="1">Allosterically activated by N-acetylglucosamine 6-phosphate (GlcNAc6P).</text>
</comment>
<comment type="pathway">
    <text evidence="1">Amino-sugar metabolism; N-acetylneuraminate degradation; D-fructose 6-phosphate from N-acetylneuraminate: step 5/5.</text>
</comment>
<comment type="similarity">
    <text evidence="1">Belongs to the glucosamine/galactosamine-6-phosphate isomerase family. NagB subfamily.</text>
</comment>
<feature type="chain" id="PRO_1000067033" description="Glucosamine-6-phosphate deaminase">
    <location>
        <begin position="1"/>
        <end position="270"/>
    </location>
</feature>
<feature type="active site" description="Proton acceptor; for enolization step" evidence="1">
    <location>
        <position position="72"/>
    </location>
</feature>
<feature type="active site" description="For ring-opening step" evidence="1">
    <location>
        <position position="141"/>
    </location>
</feature>
<feature type="active site" description="Proton acceptor; for ring-opening step" evidence="1">
    <location>
        <position position="143"/>
    </location>
</feature>
<feature type="active site" description="For ring-opening step" evidence="1">
    <location>
        <position position="148"/>
    </location>
</feature>
<feature type="site" description="Part of the allosteric site" evidence="1">
    <location>
        <position position="151"/>
    </location>
</feature>
<feature type="site" description="Part of the allosteric site" evidence="1">
    <location>
        <position position="158"/>
    </location>
</feature>
<feature type="site" description="Part of the allosteric site" evidence="1">
    <location>
        <position position="160"/>
    </location>
</feature>
<feature type="site" description="Part of the allosteric site" evidence="1">
    <location>
        <position position="161"/>
    </location>
</feature>
<feature type="site" description="Part of the allosteric site" evidence="1">
    <location>
        <position position="254"/>
    </location>
</feature>
<protein>
    <recommendedName>
        <fullName evidence="1">Glucosamine-6-phosphate deaminase</fullName>
        <ecNumber evidence="1">3.5.99.6</ecNumber>
    </recommendedName>
    <alternativeName>
        <fullName evidence="1">GlcN6P deaminase</fullName>
        <shortName evidence="1">GNPDA</shortName>
    </alternativeName>
    <alternativeName>
        <fullName evidence="1">Glucosamine-6-phosphate isomerase</fullName>
    </alternativeName>
</protein>
<dbReference type="EC" id="3.5.99.6" evidence="1"/>
<dbReference type="EMBL" id="AE017226">
    <property type="protein sequence ID" value="AAS10832.1"/>
    <property type="molecule type" value="Genomic_DNA"/>
</dbReference>
<dbReference type="RefSeq" id="NP_970951.1">
    <property type="nucleotide sequence ID" value="NC_002967.9"/>
</dbReference>
<dbReference type="RefSeq" id="WP_002681305.1">
    <property type="nucleotide sequence ID" value="NC_002967.9"/>
</dbReference>
<dbReference type="SMR" id="Q73QV6"/>
<dbReference type="STRING" id="243275.TDE_0337"/>
<dbReference type="PaxDb" id="243275-TDE_0337"/>
<dbReference type="GeneID" id="2739336"/>
<dbReference type="KEGG" id="tde:TDE_0337"/>
<dbReference type="PATRIC" id="fig|243275.7.peg.326"/>
<dbReference type="eggNOG" id="COG0363">
    <property type="taxonomic scope" value="Bacteria"/>
</dbReference>
<dbReference type="HOGENOM" id="CLU_049611_0_1_12"/>
<dbReference type="OrthoDB" id="9791139at2"/>
<dbReference type="UniPathway" id="UPA00629">
    <property type="reaction ID" value="UER00684"/>
</dbReference>
<dbReference type="Proteomes" id="UP000008212">
    <property type="component" value="Chromosome"/>
</dbReference>
<dbReference type="GO" id="GO:0005737">
    <property type="term" value="C:cytoplasm"/>
    <property type="evidence" value="ECO:0007669"/>
    <property type="project" value="TreeGrafter"/>
</dbReference>
<dbReference type="GO" id="GO:0004342">
    <property type="term" value="F:glucosamine-6-phosphate deaminase activity"/>
    <property type="evidence" value="ECO:0007669"/>
    <property type="project" value="UniProtKB-UniRule"/>
</dbReference>
<dbReference type="GO" id="GO:0042802">
    <property type="term" value="F:identical protein binding"/>
    <property type="evidence" value="ECO:0007669"/>
    <property type="project" value="TreeGrafter"/>
</dbReference>
<dbReference type="GO" id="GO:0005975">
    <property type="term" value="P:carbohydrate metabolic process"/>
    <property type="evidence" value="ECO:0007669"/>
    <property type="project" value="InterPro"/>
</dbReference>
<dbReference type="GO" id="GO:0006043">
    <property type="term" value="P:glucosamine catabolic process"/>
    <property type="evidence" value="ECO:0007669"/>
    <property type="project" value="TreeGrafter"/>
</dbReference>
<dbReference type="GO" id="GO:0006046">
    <property type="term" value="P:N-acetylglucosamine catabolic process"/>
    <property type="evidence" value="ECO:0007669"/>
    <property type="project" value="TreeGrafter"/>
</dbReference>
<dbReference type="GO" id="GO:0019262">
    <property type="term" value="P:N-acetylneuraminate catabolic process"/>
    <property type="evidence" value="ECO:0007669"/>
    <property type="project" value="UniProtKB-UniRule"/>
</dbReference>
<dbReference type="CDD" id="cd01399">
    <property type="entry name" value="GlcN6P_deaminase"/>
    <property type="match status" value="1"/>
</dbReference>
<dbReference type="FunFam" id="3.40.50.1360:FF:000002">
    <property type="entry name" value="Glucosamine-6-phosphate deaminase"/>
    <property type="match status" value="1"/>
</dbReference>
<dbReference type="Gene3D" id="3.40.50.1360">
    <property type="match status" value="1"/>
</dbReference>
<dbReference type="HAMAP" id="MF_01241">
    <property type="entry name" value="GlcN6P_deamin"/>
    <property type="match status" value="1"/>
</dbReference>
<dbReference type="InterPro" id="IPR006148">
    <property type="entry name" value="Glc/Gal-6P_isomerase"/>
</dbReference>
<dbReference type="InterPro" id="IPR004547">
    <property type="entry name" value="Glucosamine6P_isomerase"/>
</dbReference>
<dbReference type="InterPro" id="IPR018321">
    <property type="entry name" value="Glucosamine6P_isomerase_CS"/>
</dbReference>
<dbReference type="InterPro" id="IPR037171">
    <property type="entry name" value="NagB/RpiA_transferase-like"/>
</dbReference>
<dbReference type="NCBIfam" id="TIGR00502">
    <property type="entry name" value="nagB"/>
    <property type="match status" value="1"/>
</dbReference>
<dbReference type="PANTHER" id="PTHR11280">
    <property type="entry name" value="GLUCOSAMINE-6-PHOSPHATE ISOMERASE"/>
    <property type="match status" value="1"/>
</dbReference>
<dbReference type="PANTHER" id="PTHR11280:SF5">
    <property type="entry name" value="GLUCOSAMINE-6-PHOSPHATE ISOMERASE"/>
    <property type="match status" value="1"/>
</dbReference>
<dbReference type="Pfam" id="PF01182">
    <property type="entry name" value="Glucosamine_iso"/>
    <property type="match status" value="1"/>
</dbReference>
<dbReference type="SUPFAM" id="SSF100950">
    <property type="entry name" value="NagB/RpiA/CoA transferase-like"/>
    <property type="match status" value="1"/>
</dbReference>
<dbReference type="PROSITE" id="PS01161">
    <property type="entry name" value="GLC_GALNAC_ISOMERASE"/>
    <property type="match status" value="1"/>
</dbReference>
<evidence type="ECO:0000255" key="1">
    <source>
        <dbReference type="HAMAP-Rule" id="MF_01241"/>
    </source>
</evidence>
<accession>Q73QV6</accession>
<reference key="1">
    <citation type="journal article" date="2004" name="Proc. Natl. Acad. Sci. U.S.A.">
        <title>Comparison of the genome of the oral pathogen Treponema denticola with other spirochete genomes.</title>
        <authorList>
            <person name="Seshadri R."/>
            <person name="Myers G.S.A."/>
            <person name="Tettelin H."/>
            <person name="Eisen J.A."/>
            <person name="Heidelberg J.F."/>
            <person name="Dodson R.J."/>
            <person name="Davidsen T.M."/>
            <person name="DeBoy R.T."/>
            <person name="Fouts D.E."/>
            <person name="Haft D.H."/>
            <person name="Selengut J."/>
            <person name="Ren Q."/>
            <person name="Brinkac L.M."/>
            <person name="Madupu R."/>
            <person name="Kolonay J.F."/>
            <person name="Durkin S.A."/>
            <person name="Daugherty S.C."/>
            <person name="Shetty J."/>
            <person name="Shvartsbeyn A."/>
            <person name="Gebregeorgis E."/>
            <person name="Geer K."/>
            <person name="Tsegaye G."/>
            <person name="Malek J.A."/>
            <person name="Ayodeji B."/>
            <person name="Shatsman S."/>
            <person name="McLeod M.P."/>
            <person name="Smajs D."/>
            <person name="Howell J.K."/>
            <person name="Pal S."/>
            <person name="Amin A."/>
            <person name="Vashisth P."/>
            <person name="McNeill T.Z."/>
            <person name="Xiang Q."/>
            <person name="Sodergren E."/>
            <person name="Baca E."/>
            <person name="Weinstock G.M."/>
            <person name="Norris S.J."/>
            <person name="Fraser C.M."/>
            <person name="Paulsen I.T."/>
        </authorList>
    </citation>
    <scope>NUCLEOTIDE SEQUENCE [LARGE SCALE GENOMIC DNA]</scope>
    <source>
        <strain>ATCC 35405 / DSM 14222 / CIP 103919 / JCM 8153 / KCTC 15104</strain>
    </source>
</reference>
<keyword id="KW-0021">Allosteric enzyme</keyword>
<keyword id="KW-0119">Carbohydrate metabolism</keyword>
<keyword id="KW-0378">Hydrolase</keyword>
<keyword id="KW-1185">Reference proteome</keyword>
<gene>
    <name evidence="1" type="primary">nagB</name>
    <name type="ordered locus">TDE_0337</name>
</gene>